<proteinExistence type="evidence at protein level"/>
<keyword id="KW-0025">Alternative splicing</keyword>
<keyword id="KW-1003">Cell membrane</keyword>
<keyword id="KW-1015">Disulfide bond</keyword>
<keyword id="KW-0254">Endocytosis</keyword>
<keyword id="KW-0325">Glycoprotein</keyword>
<keyword id="KW-0472">Membrane</keyword>
<keyword id="KW-0597">Phosphoprotein</keyword>
<keyword id="KW-0675">Receptor</keyword>
<keyword id="KW-1185">Reference proteome</keyword>
<keyword id="KW-0964">Secreted</keyword>
<keyword id="KW-0732">Signal</keyword>
<keyword id="KW-0812">Transmembrane</keyword>
<keyword id="KW-1133">Transmembrane helix</keyword>
<keyword id="KW-0832">Ubl conjugation</keyword>
<protein>
    <recommendedName>
        <fullName evidence="13">Growth hormone receptor</fullName>
        <shortName>GH receptor</shortName>
    </recommendedName>
    <alternativeName>
        <fullName>Somatotropin receptor</fullName>
    </alternativeName>
    <component>
        <recommendedName>
            <fullName>Growth hormone-binding protein</fullName>
            <shortName>GH-binding protein</shortName>
            <shortName>GHBP</shortName>
        </recommendedName>
        <alternativeName>
            <fullName>Serum-binding protein</fullName>
        </alternativeName>
    </component>
</protein>
<reference key="1">
    <citation type="journal article" date="1989" name="J. Biol. Chem.">
        <title>Regulation of rat growth hormone receptor gene expression.</title>
        <authorList>
            <person name="Mathews L.S."/>
            <person name="Enberg B."/>
            <person name="Norstedt G."/>
        </authorList>
    </citation>
    <scope>NUCLEOTIDE SEQUENCE [MRNA]</scope>
    <scope>TISSUE SPECIFICITY</scope>
    <scope>DEVELOPMENTAL STAGE</scope>
    <source>
        <tissue>Liver</tissue>
    </source>
</reference>
<reference key="2">
    <citation type="journal article" date="1989" name="Genes Dev.">
        <title>The growth hormone-binding protein in rat serum is an alternatively spliced form of the rat growth hormone receptor.</title>
        <authorList>
            <person name="Baumbach W.R."/>
            <person name="Horner D.L."/>
            <person name="Logan J.S."/>
        </authorList>
    </citation>
    <scope>NUCLEOTIDE SEQUENCE (ISOFORMS 1 AND 2)</scope>
</reference>
<reference key="3">
    <citation type="journal article" date="1992" name="Endocrinology">
        <title>Characterization of the short isoform of the growth hormone receptor synthesized by rat adipocytes.</title>
        <authorList>
            <person name="Frick G.P."/>
            <person name="Goodman H.M."/>
        </authorList>
    </citation>
    <scope>NUCLEOTIDE SEQUENCE [MRNA] (ISOFORM 2)</scope>
    <source>
        <tissue>Adipose tissue</tissue>
    </source>
</reference>
<reference key="4">
    <citation type="journal article" date="1996" name="Gene">
        <title>Structural comparison of a portion of the rat and mouse growth hormone receptor/binding protein genes.</title>
        <authorList>
            <person name="Zhou Y."/>
            <person name="He L."/>
            <person name="Kopchick J.J."/>
        </authorList>
    </citation>
    <scope>PARTIAL NUCLEOTIDE SEQUENCE [GENOMIC DNA] (ISOFORM 2)</scope>
</reference>
<reference key="5">
    <citation type="journal article" date="1994" name="J. Biol. Chem.">
        <title>Domains of the growth hormone receptor required for association and activation of JAK2 tyrosine kinase.</title>
        <authorList>
            <person name="VanderKuur J.A."/>
            <person name="Wang X."/>
            <person name="Zhang L."/>
            <person name="Campbell G.S."/>
            <person name="Allevato G."/>
            <person name="Billestrup N."/>
            <person name="Norstedt G."/>
            <person name="Carter-Su C."/>
        </authorList>
    </citation>
    <scope>DOMAIN JAK2 BINDING</scope>
</reference>
<reference key="6">
    <citation type="journal article" date="1995" name="J. Biol. Chem.">
        <title>Identification of phenylalanine 346 in the rat growth hormone receptor as being critical for ligand-mediated internalization and down-regulation.</title>
        <authorList>
            <person name="Allevato G."/>
            <person name="Billestrup N."/>
            <person name="Goujon L."/>
            <person name="Galsgaard E.D."/>
            <person name="Norstedt G."/>
            <person name="Postel-Vinay M.-C."/>
            <person name="Kelly P.A."/>
            <person name="Nielsen J.H."/>
        </authorList>
    </citation>
    <scope>ENDOCYTOSIS SIGNAL</scope>
    <scope>MUTAGENESIS OF PHE-346</scope>
</reference>
<reference key="7">
    <citation type="journal article" date="1999" name="J. Biol. Chem.">
        <title>SOCS/CIS protein inhibition of growth hormone-stimulated STAT5 signaling by multiple mechanisms.</title>
        <authorList>
            <person name="Ram P.A."/>
            <person name="Waxman D.J."/>
        </authorList>
    </citation>
    <scope>INTERACTION WITH SOCS FAMILY PROTEINS</scope>
</reference>
<reference key="8">
    <citation type="journal article" date="1995" name="J. Biol. Chem.">
        <title>Growth hormone-dependent phosphorylation of tyrosine 333 and/or 338 of the growth hormone receptor.</title>
        <authorList>
            <person name="VanderKuur J.A."/>
            <person name="Wang X."/>
            <person name="Zhang L."/>
            <person name="Allevato G."/>
            <person name="Billestrup N."/>
            <person name="Carter-Su C."/>
        </authorList>
    </citation>
    <scope>PHOSPHORYLATION BY JAK2</scope>
</reference>
<reference key="9">
    <citation type="journal article" date="1997" name="Endocrinology">
        <title>Growth hormone-induced tyrosyl phosphorylation and deoxyribonucleic acid binding activity of Stat5A and Stat5B.</title>
        <authorList>
            <person name="Smit L.S."/>
            <person name="Vanderkuur J.A."/>
            <person name="Stimage A."/>
            <person name="Han Y."/>
            <person name="Luo G."/>
            <person name="Yu-Lee L.-Y."/>
            <person name="Schwartz J."/>
            <person name="Carter-Su C."/>
        </authorList>
    </citation>
    <scope>PHOSPHORYLATION</scope>
    <scope>FUNCTION</scope>
</reference>
<reference key="10">
    <citation type="journal article" date="2001" name="J. Interferon Cytokine Res.">
        <title>Growth hormone receptor interaction with Jak proteins differs between tissues.</title>
        <authorList>
            <person name="Hellgren G."/>
            <person name="Albertsson-Wikland K."/>
            <person name="Billig H."/>
            <person name="Carlsson L.M."/>
            <person name="Carlsson B."/>
        </authorList>
    </citation>
    <scope>FUNCTION</scope>
</reference>
<dbReference type="EMBL" id="J04811">
    <property type="protein sequence ID" value="AAA41219.1"/>
    <property type="molecule type" value="mRNA"/>
</dbReference>
<dbReference type="EMBL" id="S49003">
    <property type="protein sequence ID" value="AAP13886.1"/>
    <property type="molecule type" value="mRNA"/>
</dbReference>
<dbReference type="EMBL" id="U44722">
    <property type="protein sequence ID" value="AAC52916.1"/>
    <property type="molecule type" value="Genomic_DNA"/>
</dbReference>
<dbReference type="PIR" id="A32985">
    <property type="entry name" value="A33505"/>
</dbReference>
<dbReference type="PIR" id="B32985">
    <property type="entry name" value="B32985"/>
</dbReference>
<dbReference type="RefSeq" id="NP_058790.1">
    <molecule id="P16310-1"/>
    <property type="nucleotide sequence ID" value="NM_017094.2"/>
</dbReference>
<dbReference type="RefSeq" id="XP_008758976.1">
    <molecule id="P16310-1"/>
    <property type="nucleotide sequence ID" value="XM_008760754.3"/>
</dbReference>
<dbReference type="RefSeq" id="XP_038957697.1">
    <molecule id="P16310-1"/>
    <property type="nucleotide sequence ID" value="XM_039101769.2"/>
</dbReference>
<dbReference type="RefSeq" id="XP_038957698.1">
    <molecule id="P16310-1"/>
    <property type="nucleotide sequence ID" value="XM_039101770.2"/>
</dbReference>
<dbReference type="RefSeq" id="XP_038957699.1">
    <molecule id="P16310-2"/>
    <property type="nucleotide sequence ID" value="XM_039101771.2"/>
</dbReference>
<dbReference type="RefSeq" id="XP_063137391.1">
    <molecule id="P16310-1"/>
    <property type="nucleotide sequence ID" value="XM_063281321.1"/>
</dbReference>
<dbReference type="RefSeq" id="XP_063137392.1">
    <molecule id="P16310-2"/>
    <property type="nucleotide sequence ID" value="XM_063281322.1"/>
</dbReference>
<dbReference type="RefSeq" id="XP_063137393.1">
    <molecule id="P16310-2"/>
    <property type="nucleotide sequence ID" value="XM_063281323.1"/>
</dbReference>
<dbReference type="RefSeq" id="XP_063137394.1">
    <molecule id="P16310-2"/>
    <property type="nucleotide sequence ID" value="XM_063281324.1"/>
</dbReference>
<dbReference type="SMR" id="P16310"/>
<dbReference type="BioGRID" id="247275">
    <property type="interactions" value="1"/>
</dbReference>
<dbReference type="DIP" id="DIP-63N"/>
<dbReference type="FunCoup" id="P16310">
    <property type="interactions" value="506"/>
</dbReference>
<dbReference type="IntAct" id="P16310">
    <property type="interactions" value="3"/>
</dbReference>
<dbReference type="MINT" id="P16310"/>
<dbReference type="STRING" id="10116.ENSRNOP00000044119"/>
<dbReference type="DrugCentral" id="P16310"/>
<dbReference type="GuidetoPHARMACOLOGY" id="1720"/>
<dbReference type="GlyCosmos" id="P16310">
    <property type="glycosylation" value="4 sites, No reported glycans"/>
</dbReference>
<dbReference type="GlyGen" id="P16310">
    <property type="glycosylation" value="5 sites"/>
</dbReference>
<dbReference type="iPTMnet" id="P16310"/>
<dbReference type="PhosphoSitePlus" id="P16310"/>
<dbReference type="PaxDb" id="10116-ENSRNOP00000044119"/>
<dbReference type="Ensembl" id="ENSRNOT00000021081.7">
    <molecule id="P16310-2"/>
    <property type="protein sequence ID" value="ENSRNOP00000021081.6"/>
    <property type="gene ID" value="ENSRNOG00000015654.9"/>
</dbReference>
<dbReference type="Ensembl" id="ENSRNOT00000046951.6">
    <molecule id="P16310-1"/>
    <property type="protein sequence ID" value="ENSRNOP00000044119.3"/>
    <property type="gene ID" value="ENSRNOG00000015654.9"/>
</dbReference>
<dbReference type="GeneID" id="25235"/>
<dbReference type="KEGG" id="rno:25235"/>
<dbReference type="AGR" id="RGD:2687"/>
<dbReference type="CTD" id="2690"/>
<dbReference type="RGD" id="2687">
    <property type="gene designation" value="Ghr"/>
</dbReference>
<dbReference type="eggNOG" id="KOG3555">
    <property type="taxonomic scope" value="Eukaryota"/>
</dbReference>
<dbReference type="GeneTree" id="ENSGT00940000159987"/>
<dbReference type="HOGENOM" id="CLU_022322_0_0_1"/>
<dbReference type="InParanoid" id="P16310"/>
<dbReference type="OMA" id="YKPQLYN"/>
<dbReference type="OrthoDB" id="9890215at2759"/>
<dbReference type="PhylomeDB" id="P16310"/>
<dbReference type="Reactome" id="R-RNO-1170546">
    <property type="pathway name" value="Prolactin receptor signaling"/>
</dbReference>
<dbReference type="Reactome" id="R-RNO-982772">
    <property type="pathway name" value="Growth hormone receptor signaling"/>
</dbReference>
<dbReference type="PRO" id="PR:P16310"/>
<dbReference type="Proteomes" id="UP000002494">
    <property type="component" value="Chromosome 2"/>
</dbReference>
<dbReference type="Bgee" id="ENSRNOG00000015654">
    <property type="expression patterns" value="Expressed in liver and 18 other cell types or tissues"/>
</dbReference>
<dbReference type="ExpressionAtlas" id="P16310">
    <property type="expression patterns" value="baseline and differential"/>
</dbReference>
<dbReference type="GO" id="GO:0009986">
    <property type="term" value="C:cell surface"/>
    <property type="evidence" value="ECO:0000266"/>
    <property type="project" value="RGD"/>
</dbReference>
<dbReference type="GO" id="GO:0036464">
    <property type="term" value="C:cytoplasmic ribonucleoprotein granule"/>
    <property type="evidence" value="ECO:0007669"/>
    <property type="project" value="Ensembl"/>
</dbReference>
<dbReference type="GO" id="GO:0005829">
    <property type="term" value="C:cytosol"/>
    <property type="evidence" value="ECO:0000318"/>
    <property type="project" value="GO_Central"/>
</dbReference>
<dbReference type="GO" id="GO:0009897">
    <property type="term" value="C:external side of plasma membrane"/>
    <property type="evidence" value="ECO:0000318"/>
    <property type="project" value="GO_Central"/>
</dbReference>
<dbReference type="GO" id="GO:0005615">
    <property type="term" value="C:extracellular space"/>
    <property type="evidence" value="ECO:0000314"/>
    <property type="project" value="RGD"/>
</dbReference>
<dbReference type="GO" id="GO:0070195">
    <property type="term" value="C:growth hormone receptor complex"/>
    <property type="evidence" value="ECO:0000266"/>
    <property type="project" value="RGD"/>
</dbReference>
<dbReference type="GO" id="GO:0016020">
    <property type="term" value="C:membrane"/>
    <property type="evidence" value="ECO:0000266"/>
    <property type="project" value="RGD"/>
</dbReference>
<dbReference type="GO" id="GO:0043025">
    <property type="term" value="C:neuronal cell body"/>
    <property type="evidence" value="ECO:0000314"/>
    <property type="project" value="RGD"/>
</dbReference>
<dbReference type="GO" id="GO:0005634">
    <property type="term" value="C:nucleus"/>
    <property type="evidence" value="ECO:0000266"/>
    <property type="project" value="RGD"/>
</dbReference>
<dbReference type="GO" id="GO:0005886">
    <property type="term" value="C:plasma membrane"/>
    <property type="evidence" value="ECO:0000266"/>
    <property type="project" value="RGD"/>
</dbReference>
<dbReference type="GO" id="GO:0043235">
    <property type="term" value="C:receptor complex"/>
    <property type="evidence" value="ECO:0000266"/>
    <property type="project" value="RGD"/>
</dbReference>
<dbReference type="GO" id="GO:0019955">
    <property type="term" value="F:cytokine binding"/>
    <property type="evidence" value="ECO:0000318"/>
    <property type="project" value="GO_Central"/>
</dbReference>
<dbReference type="GO" id="GO:0019838">
    <property type="term" value="F:growth factor binding"/>
    <property type="evidence" value="ECO:0000266"/>
    <property type="project" value="RGD"/>
</dbReference>
<dbReference type="GO" id="GO:0004903">
    <property type="term" value="F:growth hormone receptor activity"/>
    <property type="evidence" value="ECO:0000314"/>
    <property type="project" value="RGD"/>
</dbReference>
<dbReference type="GO" id="GO:0042802">
    <property type="term" value="F:identical protein binding"/>
    <property type="evidence" value="ECO:0000266"/>
    <property type="project" value="RGD"/>
</dbReference>
<dbReference type="GO" id="GO:0008289">
    <property type="term" value="F:lipid binding"/>
    <property type="evidence" value="ECO:0000266"/>
    <property type="project" value="RGD"/>
</dbReference>
<dbReference type="GO" id="GO:0017046">
    <property type="term" value="F:peptide hormone binding"/>
    <property type="evidence" value="ECO:0000266"/>
    <property type="project" value="RGD"/>
</dbReference>
<dbReference type="GO" id="GO:0042803">
    <property type="term" value="F:protein homodimerization activity"/>
    <property type="evidence" value="ECO:0000266"/>
    <property type="project" value="RGD"/>
</dbReference>
<dbReference type="GO" id="GO:0019901">
    <property type="term" value="F:protein kinase binding"/>
    <property type="evidence" value="ECO:0000314"/>
    <property type="project" value="BHF-UCL"/>
</dbReference>
<dbReference type="GO" id="GO:0019903">
    <property type="term" value="F:protein phosphatase binding"/>
    <property type="evidence" value="ECO:0000315"/>
    <property type="project" value="RGD"/>
</dbReference>
<dbReference type="GO" id="GO:0042169">
    <property type="term" value="F:SH2 domain binding"/>
    <property type="evidence" value="ECO:0000314"/>
    <property type="project" value="RGD"/>
</dbReference>
<dbReference type="GO" id="GO:0060351">
    <property type="term" value="P:cartilage development involved in endochondral bone morphogenesis"/>
    <property type="evidence" value="ECO:0000270"/>
    <property type="project" value="RGD"/>
</dbReference>
<dbReference type="GO" id="GO:0007259">
    <property type="term" value="P:cell surface receptor signaling pathway via JAK-STAT"/>
    <property type="evidence" value="ECO:0000314"/>
    <property type="project" value="BHF-UCL"/>
</dbReference>
<dbReference type="GO" id="GO:0032870">
    <property type="term" value="P:cellular response to hormone stimulus"/>
    <property type="evidence" value="ECO:0000266"/>
    <property type="project" value="RGD"/>
</dbReference>
<dbReference type="GO" id="GO:0032869">
    <property type="term" value="P:cellular response to insulin stimulus"/>
    <property type="evidence" value="ECO:0000270"/>
    <property type="project" value="RGD"/>
</dbReference>
<dbReference type="GO" id="GO:0019221">
    <property type="term" value="P:cytokine-mediated signaling pathway"/>
    <property type="evidence" value="ECO:0000318"/>
    <property type="project" value="GO_Central"/>
</dbReference>
<dbReference type="GO" id="GO:0006897">
    <property type="term" value="P:endocytosis"/>
    <property type="evidence" value="ECO:0007669"/>
    <property type="project" value="UniProtKB-KW"/>
</dbReference>
<dbReference type="GO" id="GO:0060396">
    <property type="term" value="P:growth hormone receptor signaling pathway"/>
    <property type="evidence" value="ECO:0000314"/>
    <property type="project" value="BHF-UCL"/>
</dbReference>
<dbReference type="GO" id="GO:0060397">
    <property type="term" value="P:growth hormone receptor signaling pathway via JAK-STAT"/>
    <property type="evidence" value="ECO:0000266"/>
    <property type="project" value="RGD"/>
</dbReference>
<dbReference type="GO" id="GO:0042445">
    <property type="term" value="P:hormone metabolic process"/>
    <property type="evidence" value="ECO:0000266"/>
    <property type="project" value="RGD"/>
</dbReference>
<dbReference type="GO" id="GO:0009755">
    <property type="term" value="P:hormone-mediated signaling pathway"/>
    <property type="evidence" value="ECO:0000314"/>
    <property type="project" value="RGD"/>
</dbReference>
<dbReference type="GO" id="GO:0048009">
    <property type="term" value="P:insulin-like growth factor receptor signaling pathway"/>
    <property type="evidence" value="ECO:0000266"/>
    <property type="project" value="RGD"/>
</dbReference>
<dbReference type="GO" id="GO:0045597">
    <property type="term" value="P:positive regulation of cell differentiation"/>
    <property type="evidence" value="ECO:0000270"/>
    <property type="project" value="RGD"/>
</dbReference>
<dbReference type="GO" id="GO:0008284">
    <property type="term" value="P:positive regulation of cell population proliferation"/>
    <property type="evidence" value="ECO:0000318"/>
    <property type="project" value="GO_Central"/>
</dbReference>
<dbReference type="GO" id="GO:0043406">
    <property type="term" value="P:positive regulation of MAP kinase activity"/>
    <property type="evidence" value="ECO:0000314"/>
    <property type="project" value="BHF-UCL"/>
</dbReference>
<dbReference type="GO" id="GO:0040018">
    <property type="term" value="P:positive regulation of multicellular organism growth"/>
    <property type="evidence" value="ECO:0000266"/>
    <property type="project" value="RGD"/>
</dbReference>
<dbReference type="GO" id="GO:0046427">
    <property type="term" value="P:positive regulation of receptor signaling pathway via JAK-STAT"/>
    <property type="evidence" value="ECO:0000314"/>
    <property type="project" value="RGD"/>
</dbReference>
<dbReference type="GO" id="GO:0040014">
    <property type="term" value="P:regulation of multicellular organism growth"/>
    <property type="evidence" value="ECO:0000266"/>
    <property type="project" value="RGD"/>
</dbReference>
<dbReference type="GO" id="GO:0032107">
    <property type="term" value="P:regulation of response to nutrient levels"/>
    <property type="evidence" value="ECO:0000315"/>
    <property type="project" value="RGD"/>
</dbReference>
<dbReference type="GO" id="GO:0034097">
    <property type="term" value="P:response to cytokine"/>
    <property type="evidence" value="ECO:0000270"/>
    <property type="project" value="RGD"/>
</dbReference>
<dbReference type="GO" id="GO:0032094">
    <property type="term" value="P:response to food"/>
    <property type="evidence" value="ECO:0000270"/>
    <property type="project" value="RGD"/>
</dbReference>
<dbReference type="GO" id="GO:0051384">
    <property type="term" value="P:response to glucocorticoid"/>
    <property type="evidence" value="ECO:0000270"/>
    <property type="project" value="RGD"/>
</dbReference>
<dbReference type="GO" id="GO:0009629">
    <property type="term" value="P:response to gravity"/>
    <property type="evidence" value="ECO:0000270"/>
    <property type="project" value="RGD"/>
</dbReference>
<dbReference type="GO" id="GO:0060416">
    <property type="term" value="P:response to growth hormone"/>
    <property type="evidence" value="ECO:0000270"/>
    <property type="project" value="RGD"/>
</dbReference>
<dbReference type="GO" id="GO:0009725">
    <property type="term" value="P:response to hormone"/>
    <property type="evidence" value="ECO:0000270"/>
    <property type="project" value="RGD"/>
</dbReference>
<dbReference type="GO" id="GO:0070555">
    <property type="term" value="P:response to interleukin-1"/>
    <property type="evidence" value="ECO:0000270"/>
    <property type="project" value="RGD"/>
</dbReference>
<dbReference type="GO" id="GO:0043434">
    <property type="term" value="P:response to peptide hormone"/>
    <property type="evidence" value="ECO:0000270"/>
    <property type="project" value="RGD"/>
</dbReference>
<dbReference type="GO" id="GO:0019530">
    <property type="term" value="P:taurine metabolic process"/>
    <property type="evidence" value="ECO:0000266"/>
    <property type="project" value="RGD"/>
</dbReference>
<dbReference type="CDD" id="cd00063">
    <property type="entry name" value="FN3"/>
    <property type="match status" value="1"/>
</dbReference>
<dbReference type="FunFam" id="2.60.40.10:FF:000269">
    <property type="entry name" value="Growth hormone receptor"/>
    <property type="match status" value="1"/>
</dbReference>
<dbReference type="FunFam" id="2.60.40.10:FF:000318">
    <property type="entry name" value="Growth hormone receptor"/>
    <property type="match status" value="1"/>
</dbReference>
<dbReference type="Gene3D" id="2.60.40.10">
    <property type="entry name" value="Immunoglobulins"/>
    <property type="match status" value="2"/>
</dbReference>
<dbReference type="InterPro" id="IPR003961">
    <property type="entry name" value="FN3_dom"/>
</dbReference>
<dbReference type="InterPro" id="IPR036116">
    <property type="entry name" value="FN3_sf"/>
</dbReference>
<dbReference type="InterPro" id="IPR025871">
    <property type="entry name" value="GHBP"/>
</dbReference>
<dbReference type="InterPro" id="IPR015152">
    <property type="entry name" value="Growth/epo_recpt_lig-bind"/>
</dbReference>
<dbReference type="InterPro" id="IPR013783">
    <property type="entry name" value="Ig-like_fold"/>
</dbReference>
<dbReference type="InterPro" id="IPR003528">
    <property type="entry name" value="Long_hematopoietin_rcpt_CS"/>
</dbReference>
<dbReference type="PANTHER" id="PTHR23037">
    <property type="entry name" value="CYTOKINE RECEPTOR"/>
    <property type="match status" value="1"/>
</dbReference>
<dbReference type="PANTHER" id="PTHR23037:SF46">
    <property type="entry name" value="INTERLEUKIN 5 RECEPTOR SUBUNIT ALPHA"/>
    <property type="match status" value="1"/>
</dbReference>
<dbReference type="Pfam" id="PF09067">
    <property type="entry name" value="EpoR_lig-bind"/>
    <property type="match status" value="1"/>
</dbReference>
<dbReference type="Pfam" id="PF12772">
    <property type="entry name" value="GHBP"/>
    <property type="match status" value="1"/>
</dbReference>
<dbReference type="SUPFAM" id="SSF49265">
    <property type="entry name" value="Fibronectin type III"/>
    <property type="match status" value="2"/>
</dbReference>
<dbReference type="PROSITE" id="PS50853">
    <property type="entry name" value="FN3"/>
    <property type="match status" value="1"/>
</dbReference>
<dbReference type="PROSITE" id="PS01352">
    <property type="entry name" value="HEMATOPO_REC_L_F1"/>
    <property type="match status" value="1"/>
</dbReference>
<gene>
    <name type="primary">Ghr</name>
</gene>
<accession>P16310</accession>
<accession>Q64236</accession>
<accession>Q80XW9</accession>
<comment type="function">
    <text evidence="6 11">Receptor for pituitary gland growth hormone involved in regulating postnatal body growth (PubMed:11244571). On ligand binding, couples to, and activates the JAK2/STAT5 pathway (PubMed:11244571, PubMed:9231797).</text>
</comment>
<comment type="function">
    <text evidence="1">Receptor for pituitary gland growth hormone (GH1) involved in regulating postnatal body growth. On ligand binding, couples to the JAK2/STAT5 pathway.</text>
</comment>
<comment type="function">
    <molecule>Growth hormone-binding protein</molecule>
    <text evidence="1">The soluble form (GHBP) acts as a reservoir of growth hormone in plasma and may be a modulator/inhibitor of GH signaling.</text>
</comment>
<comment type="subunit">
    <text evidence="1">On growth hormone (GH) binding, forms homodimers and binds JAK2 via a box 1-containing domain.</text>
</comment>
<comment type="subcellular location">
    <subcellularLocation>
        <location evidence="1">Cell membrane</location>
        <topology evidence="3">Single-pass type I membrane protein</topology>
    </subcellularLocation>
    <text evidence="2">On growth hormone binding, GHR is ubiquitinated, internalized, down-regulated and transported into a degradative or non-degradative pathway.</text>
</comment>
<comment type="subcellular location">
    <molecule>Growth hormone-binding protein</molecule>
    <subcellularLocation>
        <location evidence="1">Secreted</location>
    </subcellularLocation>
    <text evidence="1">Complexed to a substantial fraction of circulating GH.</text>
</comment>
<comment type="alternative products">
    <event type="alternative splicing"/>
    <isoform>
        <id>P16310-1</id>
        <name>1</name>
        <sequence type="displayed"/>
    </isoform>
    <isoform>
        <id>P16310-2</id>
        <name>2</name>
        <name>Short from</name>
        <name>GHBP</name>
        <sequence type="described" ref="VSP_010231 VSP_010232"/>
    </isoform>
</comment>
<comment type="tissue specificity">
    <text evidence="7">Highest expression in liver (PubMed:2722883). Also expressed in heart, kidney and muscle (PubMed:2722883).</text>
</comment>
<comment type="developmental stage">
    <text evidence="7">Expression is low at birth (PubMed:2722883). Increases to adult levels after 5 weeks (PubMed:2722883).</text>
</comment>
<comment type="domain">
    <text evidence="10">The WSXWS motif appears to be necessary for proper protein folding and thereby efficient intracellular transport and cell-surface receptor binding.</text>
</comment>
<comment type="domain">
    <text evidence="10">The box 1 motif is required for JAK interaction and/or activation.</text>
</comment>
<comment type="domain">
    <text evidence="10">The extracellular domain is the ligand-binding domain representing the growth hormone-binding protein (GHBP).</text>
</comment>
<comment type="domain">
    <text evidence="10">The ubiquitination-dependent endocytosis motif (UbE) is required for recruitment of the ubiquitin conjugation system on to the receptor and for its internalization.</text>
</comment>
<comment type="PTM">
    <text evidence="1 2">The soluble form (GHBP) is produced by phorbol ester-promoted proteolytic cleavage at the cell surface (shedding) by ADAM17/TACE (By similarity). Shedding is inhibited by growth hormone (GH) binding to the receptor probably due to a conformational change in GHR rendering the receptor inaccessible to ADAM17 (By similarity).</text>
</comment>
<comment type="PTM">
    <text evidence="8 11">On GH binding, phosphorylated on tyrosine residues in the cytoplasmic domain by JAK2 (PubMed:7545168, PubMed:9231797). Phosphorylation on either (or all of) Tyr-534, Tyr-566 and/or Tyr-627 is required for STAT5 activation. Phosphorylation on Tyr-333 would seem necessary for JAK2 activation (PubMed:7545168, PubMed:9231797).</text>
</comment>
<comment type="PTM">
    <text evidence="1 2">Ubiquitinated by the ECS(SOCS2) complex following ligand-binding and phosphorylation by JAK2, leading to its degradation by the proteasome. Regulation by the ECS(SOCS2) complex acts as a negative feedback loop of growth hormone receptor signaling (By similarity). Ubiquitination is not sufficient for GHR internalization (By similarity).</text>
</comment>
<comment type="similarity">
    <text evidence="14">Belongs to the type I cytokine receptor family. Type 1 subfamily.</text>
</comment>
<evidence type="ECO:0000250" key="1">
    <source>
        <dbReference type="UniProtKB" id="P10912"/>
    </source>
</evidence>
<evidence type="ECO:0000250" key="2">
    <source>
        <dbReference type="UniProtKB" id="P19941"/>
    </source>
</evidence>
<evidence type="ECO:0000255" key="3"/>
<evidence type="ECO:0000255" key="4">
    <source>
        <dbReference type="PROSITE-ProRule" id="PRU00316"/>
    </source>
</evidence>
<evidence type="ECO:0000256" key="5">
    <source>
        <dbReference type="SAM" id="MobiDB-lite"/>
    </source>
</evidence>
<evidence type="ECO:0000269" key="6">
    <source>
    </source>
</evidence>
<evidence type="ECO:0000269" key="7">
    <source>
    </source>
</evidence>
<evidence type="ECO:0000269" key="8">
    <source>
    </source>
</evidence>
<evidence type="ECO:0000269" key="9">
    <source>
    </source>
</evidence>
<evidence type="ECO:0000269" key="10">
    <source>
    </source>
</evidence>
<evidence type="ECO:0000269" key="11">
    <source>
    </source>
</evidence>
<evidence type="ECO:0000303" key="12">
    <source>
    </source>
</evidence>
<evidence type="ECO:0000303" key="13">
    <source>
    </source>
</evidence>
<evidence type="ECO:0000305" key="14"/>
<evidence type="ECO:0000305" key="15">
    <source>
    </source>
</evidence>
<name>GHR_RAT</name>
<sequence>MDLWRVFLTLALAVSSDMFPGSGATPATLGKASPVLQRINPSLRESSSGKPRFTKCRSPELETFSCYWTEGDDHNLKVPGSIQLYYARRIAHEWTPEWKECPDYVSAGANSCYFNSSYTSIWIPYCIKLTTNGDLLDEKCFTVDEIVQPDPPIGLNWTLLNISLPGIRGDIQVSWQPPPSADVLKGWIILEYEIQYKEVNETKWKTMSPIWSTSVPLYSLRLDKEHEVRVRSRQRSFEKYSEFSEVLRVTFPQMDTLAACEEDFRFPWFLIIIFGIFGVAVMLFVVIFSKQQRIKMLILPPVPVPKIKGIDPDLLKEGKLEEVNTILGIHDNYKPDFYNDDSWVEFIELDIDDADEKTEESDTDRLLSDDQEKSAGILGAKDDDSGRTSCYDPDILDTDFHTSDMCDGTSEFAQPQKLKAEADLLCLDQKNLKNSPYDASLGSLHPSITLTMEDKPQPLLGSETESTHQLPSTPMSSPVSLANIDFYAQVSDITPAGGVVLSPGQKIKAGLAQGNTQLEVAAPCQENYSMNSAYFCESDAKKCIAAAPHMEATTCVKPSFNQEDIYITTESLTTTARMSETADTAPDAEPVPDYTTVHTVKSPRGLILNATALPLPDKKKFLSSCGYVSTDQLNKIMQ</sequence>
<feature type="signal peptide" evidence="3">
    <location>
        <begin position="1"/>
        <end position="18"/>
    </location>
</feature>
<feature type="chain" id="PRO_0000010969" description="Growth hormone receptor">
    <location>
        <begin position="19"/>
        <end position="638"/>
    </location>
</feature>
<feature type="chain" id="PRO_0000010970" description="Growth hormone-binding protein" evidence="2">
    <location>
        <begin position="19"/>
        <end position="256"/>
    </location>
</feature>
<feature type="topological domain" description="Extracellular" evidence="3">
    <location>
        <begin position="19"/>
        <end position="265"/>
    </location>
</feature>
<feature type="transmembrane region" description="Helical" evidence="3">
    <location>
        <begin position="266"/>
        <end position="289"/>
    </location>
</feature>
<feature type="topological domain" description="Cytoplasmic" evidence="3">
    <location>
        <begin position="290"/>
        <end position="638"/>
    </location>
</feature>
<feature type="domain" description="Fibronectin type-III" evidence="4">
    <location>
        <begin position="151"/>
        <end position="254"/>
    </location>
</feature>
<feature type="region of interest" description="Required for JAK2 binding" evidence="10">
    <location>
        <begin position="295"/>
        <end position="380"/>
    </location>
</feature>
<feature type="region of interest" description="Disordered" evidence="5">
    <location>
        <begin position="357"/>
        <end position="389"/>
    </location>
</feature>
<feature type="short sequence motif" description="WSXWS motif" evidence="1">
    <location>
        <begin position="240"/>
        <end position="244"/>
    </location>
</feature>
<feature type="short sequence motif" description="Box 1 motif" evidence="10">
    <location>
        <begin position="298"/>
        <end position="306"/>
    </location>
</feature>
<feature type="short sequence motif" description="UbE motif" evidence="15">
    <location>
        <begin position="341"/>
        <end position="350"/>
    </location>
</feature>
<feature type="compositionally biased region" description="Basic and acidic residues" evidence="5">
    <location>
        <begin position="363"/>
        <end position="373"/>
    </location>
</feature>
<feature type="modified residue" description="Phosphoserine" evidence="1">
    <location>
        <position position="342"/>
    </location>
</feature>
<feature type="modified residue" description="Phosphotyrosine" evidence="1">
    <location>
        <position position="487"/>
    </location>
</feature>
<feature type="modified residue" description="Phosphotyrosine" evidence="1">
    <location>
        <position position="594"/>
    </location>
</feature>
<feature type="glycosylation site" description="N-linked (GlcNAc...) asparagine" evidence="3">
    <location>
        <position position="115"/>
    </location>
</feature>
<feature type="glycosylation site" description="N-linked (GlcNAc...) asparagine" evidence="3">
    <location>
        <position position="156"/>
    </location>
</feature>
<feature type="glycosylation site" description="N-linked (GlcNAc...) asparagine" evidence="3">
    <location>
        <position position="161"/>
    </location>
</feature>
<feature type="glycosylation site" description="N-linked (GlcNAc...) asparagine" evidence="3">
    <location>
        <position position="200"/>
    </location>
</feature>
<feature type="disulfide bond" evidence="1">
    <location>
        <begin position="56"/>
        <end position="66"/>
    </location>
</feature>
<feature type="disulfide bond" evidence="1">
    <location>
        <begin position="101"/>
        <end position="112"/>
    </location>
</feature>
<feature type="disulfide bond" evidence="1">
    <location>
        <begin position="126"/>
        <end position="140"/>
    </location>
</feature>
<feature type="splice variant" id="VSP_010231" description="In isoform 2." evidence="12">
    <original>DFRFPWFLIIIFGIFGV</original>
    <variation>GPKFNSQHPHQEIDNHL</variation>
    <location>
        <begin position="263"/>
        <end position="279"/>
    </location>
</feature>
<feature type="splice variant" id="VSP_010232" description="In isoform 2." evidence="12">
    <location>
        <begin position="280"/>
        <end position="638"/>
    </location>
</feature>
<feature type="mutagenesis site" description="No internalization nor down-regulation. No effect on transcriptional signaling." evidence="9">
    <original>F</original>
    <variation>A</variation>
    <location>
        <position position="346"/>
    </location>
</feature>
<organism>
    <name type="scientific">Rattus norvegicus</name>
    <name type="common">Rat</name>
    <dbReference type="NCBI Taxonomy" id="10116"/>
    <lineage>
        <taxon>Eukaryota</taxon>
        <taxon>Metazoa</taxon>
        <taxon>Chordata</taxon>
        <taxon>Craniata</taxon>
        <taxon>Vertebrata</taxon>
        <taxon>Euteleostomi</taxon>
        <taxon>Mammalia</taxon>
        <taxon>Eutheria</taxon>
        <taxon>Euarchontoglires</taxon>
        <taxon>Glires</taxon>
        <taxon>Rodentia</taxon>
        <taxon>Myomorpha</taxon>
        <taxon>Muroidea</taxon>
        <taxon>Muridae</taxon>
        <taxon>Murinae</taxon>
        <taxon>Rattus</taxon>
    </lineage>
</organism>